<dbReference type="EC" id="2.4.1.227" evidence="1"/>
<dbReference type="EMBL" id="CP000507">
    <property type="protein sequence ID" value="ABL98565.1"/>
    <property type="molecule type" value="Genomic_DNA"/>
</dbReference>
<dbReference type="RefSeq" id="WP_011758475.1">
    <property type="nucleotide sequence ID" value="NC_008700.1"/>
</dbReference>
<dbReference type="SMR" id="A1S2F9"/>
<dbReference type="STRING" id="326297.Sama_0354"/>
<dbReference type="CAZy" id="GT28">
    <property type="family name" value="Glycosyltransferase Family 28"/>
</dbReference>
<dbReference type="KEGG" id="saz:Sama_0354"/>
<dbReference type="eggNOG" id="COG0707">
    <property type="taxonomic scope" value="Bacteria"/>
</dbReference>
<dbReference type="HOGENOM" id="CLU_037404_2_0_6"/>
<dbReference type="OrthoDB" id="9808936at2"/>
<dbReference type="UniPathway" id="UPA00219"/>
<dbReference type="Proteomes" id="UP000009175">
    <property type="component" value="Chromosome"/>
</dbReference>
<dbReference type="GO" id="GO:0005886">
    <property type="term" value="C:plasma membrane"/>
    <property type="evidence" value="ECO:0007669"/>
    <property type="project" value="UniProtKB-SubCell"/>
</dbReference>
<dbReference type="GO" id="GO:0051991">
    <property type="term" value="F:UDP-N-acetyl-D-glucosamine:N-acetylmuramoyl-L-alanyl-D-glutamyl-meso-2,6-diaminopimelyl-D-alanyl-D-alanine-diphosphoundecaprenol 4-beta-N-acetylglucosaminlytransferase activity"/>
    <property type="evidence" value="ECO:0007669"/>
    <property type="project" value="RHEA"/>
</dbReference>
<dbReference type="GO" id="GO:0050511">
    <property type="term" value="F:undecaprenyldiphospho-muramoylpentapeptide beta-N-acetylglucosaminyltransferase activity"/>
    <property type="evidence" value="ECO:0007669"/>
    <property type="project" value="UniProtKB-UniRule"/>
</dbReference>
<dbReference type="GO" id="GO:0005975">
    <property type="term" value="P:carbohydrate metabolic process"/>
    <property type="evidence" value="ECO:0007669"/>
    <property type="project" value="InterPro"/>
</dbReference>
<dbReference type="GO" id="GO:0051301">
    <property type="term" value="P:cell division"/>
    <property type="evidence" value="ECO:0007669"/>
    <property type="project" value="UniProtKB-KW"/>
</dbReference>
<dbReference type="GO" id="GO:0071555">
    <property type="term" value="P:cell wall organization"/>
    <property type="evidence" value="ECO:0007669"/>
    <property type="project" value="UniProtKB-KW"/>
</dbReference>
<dbReference type="GO" id="GO:0030259">
    <property type="term" value="P:lipid glycosylation"/>
    <property type="evidence" value="ECO:0007669"/>
    <property type="project" value="UniProtKB-UniRule"/>
</dbReference>
<dbReference type="GO" id="GO:0009252">
    <property type="term" value="P:peptidoglycan biosynthetic process"/>
    <property type="evidence" value="ECO:0007669"/>
    <property type="project" value="UniProtKB-UniRule"/>
</dbReference>
<dbReference type="GO" id="GO:0008360">
    <property type="term" value="P:regulation of cell shape"/>
    <property type="evidence" value="ECO:0007669"/>
    <property type="project" value="UniProtKB-KW"/>
</dbReference>
<dbReference type="CDD" id="cd03785">
    <property type="entry name" value="GT28_MurG"/>
    <property type="match status" value="1"/>
</dbReference>
<dbReference type="Gene3D" id="3.40.50.2000">
    <property type="entry name" value="Glycogen Phosphorylase B"/>
    <property type="match status" value="2"/>
</dbReference>
<dbReference type="HAMAP" id="MF_00033">
    <property type="entry name" value="MurG"/>
    <property type="match status" value="1"/>
</dbReference>
<dbReference type="InterPro" id="IPR006009">
    <property type="entry name" value="GlcNAc_MurG"/>
</dbReference>
<dbReference type="InterPro" id="IPR007235">
    <property type="entry name" value="Glyco_trans_28_C"/>
</dbReference>
<dbReference type="InterPro" id="IPR004276">
    <property type="entry name" value="GlycoTrans_28_N"/>
</dbReference>
<dbReference type="NCBIfam" id="TIGR01133">
    <property type="entry name" value="murG"/>
    <property type="match status" value="1"/>
</dbReference>
<dbReference type="PANTHER" id="PTHR21015:SF22">
    <property type="entry name" value="GLYCOSYLTRANSFERASE"/>
    <property type="match status" value="1"/>
</dbReference>
<dbReference type="PANTHER" id="PTHR21015">
    <property type="entry name" value="UDP-N-ACETYLGLUCOSAMINE--N-ACETYLMURAMYL-(PENTAPEPTIDE) PYROPHOSPHORYL-UNDECAPRENOL N-ACETYLGLUCOSAMINE TRANSFERASE 1"/>
    <property type="match status" value="1"/>
</dbReference>
<dbReference type="Pfam" id="PF04101">
    <property type="entry name" value="Glyco_tran_28_C"/>
    <property type="match status" value="1"/>
</dbReference>
<dbReference type="Pfam" id="PF03033">
    <property type="entry name" value="Glyco_transf_28"/>
    <property type="match status" value="1"/>
</dbReference>
<dbReference type="SUPFAM" id="SSF53756">
    <property type="entry name" value="UDP-Glycosyltransferase/glycogen phosphorylase"/>
    <property type="match status" value="1"/>
</dbReference>
<name>MURG_SHEAM</name>
<protein>
    <recommendedName>
        <fullName evidence="1">UDP-N-acetylglucosamine--N-acetylmuramyl-(pentapeptide) pyrophosphoryl-undecaprenol N-acetylglucosamine transferase</fullName>
        <ecNumber evidence="1">2.4.1.227</ecNumber>
    </recommendedName>
    <alternativeName>
        <fullName evidence="1">Undecaprenyl-PP-MurNAc-pentapeptide-UDPGlcNAc GlcNAc transferase</fullName>
    </alternativeName>
</protein>
<keyword id="KW-0131">Cell cycle</keyword>
<keyword id="KW-0132">Cell division</keyword>
<keyword id="KW-0997">Cell inner membrane</keyword>
<keyword id="KW-1003">Cell membrane</keyword>
<keyword id="KW-0133">Cell shape</keyword>
<keyword id="KW-0961">Cell wall biogenesis/degradation</keyword>
<keyword id="KW-0328">Glycosyltransferase</keyword>
<keyword id="KW-0472">Membrane</keyword>
<keyword id="KW-0573">Peptidoglycan synthesis</keyword>
<keyword id="KW-1185">Reference proteome</keyword>
<keyword id="KW-0808">Transferase</keyword>
<reference key="1">
    <citation type="submission" date="2006-12" db="EMBL/GenBank/DDBJ databases">
        <title>Complete sequence of Shewanella amazonensis SB2B.</title>
        <authorList>
            <consortium name="US DOE Joint Genome Institute"/>
            <person name="Copeland A."/>
            <person name="Lucas S."/>
            <person name="Lapidus A."/>
            <person name="Barry K."/>
            <person name="Detter J.C."/>
            <person name="Glavina del Rio T."/>
            <person name="Hammon N."/>
            <person name="Israni S."/>
            <person name="Dalin E."/>
            <person name="Tice H."/>
            <person name="Pitluck S."/>
            <person name="Munk A.C."/>
            <person name="Brettin T."/>
            <person name="Bruce D."/>
            <person name="Han C."/>
            <person name="Tapia R."/>
            <person name="Gilna P."/>
            <person name="Schmutz J."/>
            <person name="Larimer F."/>
            <person name="Land M."/>
            <person name="Hauser L."/>
            <person name="Kyrpides N."/>
            <person name="Mikhailova N."/>
            <person name="Fredrickson J."/>
            <person name="Richardson P."/>
        </authorList>
    </citation>
    <scope>NUCLEOTIDE SEQUENCE [LARGE SCALE GENOMIC DNA]</scope>
    <source>
        <strain>ATCC BAA-1098 / SB2B</strain>
    </source>
</reference>
<comment type="function">
    <text evidence="1">Cell wall formation. Catalyzes the transfer of a GlcNAc subunit on undecaprenyl-pyrophosphoryl-MurNAc-pentapeptide (lipid intermediate I) to form undecaprenyl-pyrophosphoryl-MurNAc-(pentapeptide)GlcNAc (lipid intermediate II).</text>
</comment>
<comment type="catalytic activity">
    <reaction evidence="1">
        <text>di-trans,octa-cis-undecaprenyl diphospho-N-acetyl-alpha-D-muramoyl-L-alanyl-D-glutamyl-meso-2,6-diaminopimeloyl-D-alanyl-D-alanine + UDP-N-acetyl-alpha-D-glucosamine = di-trans,octa-cis-undecaprenyl diphospho-[N-acetyl-alpha-D-glucosaminyl-(1-&gt;4)]-N-acetyl-alpha-D-muramoyl-L-alanyl-D-glutamyl-meso-2,6-diaminopimeloyl-D-alanyl-D-alanine + UDP + H(+)</text>
        <dbReference type="Rhea" id="RHEA:31227"/>
        <dbReference type="ChEBI" id="CHEBI:15378"/>
        <dbReference type="ChEBI" id="CHEBI:57705"/>
        <dbReference type="ChEBI" id="CHEBI:58223"/>
        <dbReference type="ChEBI" id="CHEBI:61387"/>
        <dbReference type="ChEBI" id="CHEBI:61388"/>
        <dbReference type="EC" id="2.4.1.227"/>
    </reaction>
</comment>
<comment type="pathway">
    <text evidence="1">Cell wall biogenesis; peptidoglycan biosynthesis.</text>
</comment>
<comment type="subcellular location">
    <subcellularLocation>
        <location evidence="1">Cell inner membrane</location>
        <topology evidence="1">Peripheral membrane protein</topology>
        <orientation evidence="1">Cytoplasmic side</orientation>
    </subcellularLocation>
</comment>
<comment type="similarity">
    <text evidence="1">Belongs to the glycosyltransferase 28 family. MurG subfamily.</text>
</comment>
<feature type="chain" id="PRO_0000315165" description="UDP-N-acetylglucosamine--N-acetylmuramyl-(pentapeptide) pyrophosphoryl-undecaprenol N-acetylglucosamine transferase">
    <location>
        <begin position="1"/>
        <end position="360"/>
    </location>
</feature>
<feature type="binding site" evidence="1">
    <location>
        <begin position="16"/>
        <end position="18"/>
    </location>
    <ligand>
        <name>UDP-N-acetyl-alpha-D-glucosamine</name>
        <dbReference type="ChEBI" id="CHEBI:57705"/>
    </ligand>
</feature>
<feature type="binding site" evidence="1">
    <location>
        <position position="128"/>
    </location>
    <ligand>
        <name>UDP-N-acetyl-alpha-D-glucosamine</name>
        <dbReference type="ChEBI" id="CHEBI:57705"/>
    </ligand>
</feature>
<feature type="binding site" evidence="1">
    <location>
        <position position="165"/>
    </location>
    <ligand>
        <name>UDP-N-acetyl-alpha-D-glucosamine</name>
        <dbReference type="ChEBI" id="CHEBI:57705"/>
    </ligand>
</feature>
<feature type="binding site" evidence="1">
    <location>
        <position position="191"/>
    </location>
    <ligand>
        <name>UDP-N-acetyl-alpha-D-glucosamine</name>
        <dbReference type="ChEBI" id="CHEBI:57705"/>
    </ligand>
</feature>
<feature type="binding site" evidence="1">
    <location>
        <position position="247"/>
    </location>
    <ligand>
        <name>UDP-N-acetyl-alpha-D-glucosamine</name>
        <dbReference type="ChEBI" id="CHEBI:57705"/>
    </ligand>
</feature>
<feature type="binding site" evidence="1">
    <location>
        <begin position="266"/>
        <end position="271"/>
    </location>
    <ligand>
        <name>UDP-N-acetyl-alpha-D-glucosamine</name>
        <dbReference type="ChEBI" id="CHEBI:57705"/>
    </ligand>
</feature>
<feature type="binding site" evidence="1">
    <location>
        <position position="292"/>
    </location>
    <ligand>
        <name>UDP-N-acetyl-alpha-D-glucosamine</name>
        <dbReference type="ChEBI" id="CHEBI:57705"/>
    </ligand>
</feature>
<evidence type="ECO:0000255" key="1">
    <source>
        <dbReference type="HAMAP-Rule" id="MF_00033"/>
    </source>
</evidence>
<sequence>MGPQTGKRLLVMAGGTGGHVFPALAVARRLASEGWQIRWLGTADRMEARLVPQHGFDIDFIDIQGVRGNGLLRKLAAPFKVLRSVMQARKVIREFKPDVVLGMGGFASGPGGVAAKLCGIPLVLHEQNAIPGMTNKLLSRIATRVLCAFEGAFGSLGTTVGNPIREELVALGAKPRESRTEALKVLVVGGSLGAKVFNDLMPSVTARIAQLQPVTVWHQTGKNNLSTVQAEYQLQGQDGGVKIAEFIDDMEAAYRWADVVLCRAGALTVSELAAVGLPSILVPYPHAVDDHQTMNARVLVDAGAAFLVPQPIATTELLADKLQLLAGDRDELTRMGERARAAAVLDATERVAEVCRELAK</sequence>
<proteinExistence type="inferred from homology"/>
<gene>
    <name evidence="1" type="primary">murG</name>
    <name type="ordered locus">Sama_0354</name>
</gene>
<organism>
    <name type="scientific">Shewanella amazonensis (strain ATCC BAA-1098 / SB2B)</name>
    <dbReference type="NCBI Taxonomy" id="326297"/>
    <lineage>
        <taxon>Bacteria</taxon>
        <taxon>Pseudomonadati</taxon>
        <taxon>Pseudomonadota</taxon>
        <taxon>Gammaproteobacteria</taxon>
        <taxon>Alteromonadales</taxon>
        <taxon>Shewanellaceae</taxon>
        <taxon>Shewanella</taxon>
    </lineage>
</organism>
<accession>A1S2F9</accession>